<gene>
    <name evidence="1" type="primary">ackA</name>
    <name type="ordered locus">Csac_2040</name>
</gene>
<evidence type="ECO:0000255" key="1">
    <source>
        <dbReference type="HAMAP-Rule" id="MF_00020"/>
    </source>
</evidence>
<proteinExistence type="inferred from homology"/>
<organism>
    <name type="scientific">Caldicellulosiruptor saccharolyticus (strain ATCC 43494 / DSM 8903 / Tp8T 6331)</name>
    <dbReference type="NCBI Taxonomy" id="351627"/>
    <lineage>
        <taxon>Bacteria</taxon>
        <taxon>Bacillati</taxon>
        <taxon>Bacillota</taxon>
        <taxon>Bacillota incertae sedis</taxon>
        <taxon>Caldicellulosiruptorales</taxon>
        <taxon>Caldicellulosiruptoraceae</taxon>
        <taxon>Caldicellulosiruptor</taxon>
    </lineage>
</organism>
<feature type="chain" id="PRO_1000002212" description="Acetate kinase">
    <location>
        <begin position="1"/>
        <end position="399"/>
    </location>
</feature>
<feature type="active site" description="Proton donor/acceptor" evidence="1">
    <location>
        <position position="147"/>
    </location>
</feature>
<feature type="binding site" evidence="1">
    <location>
        <position position="7"/>
    </location>
    <ligand>
        <name>Mg(2+)</name>
        <dbReference type="ChEBI" id="CHEBI:18420"/>
    </ligand>
</feature>
<feature type="binding site" evidence="1">
    <location>
        <position position="14"/>
    </location>
    <ligand>
        <name>ATP</name>
        <dbReference type="ChEBI" id="CHEBI:30616"/>
    </ligand>
</feature>
<feature type="binding site" evidence="1">
    <location>
        <position position="90"/>
    </location>
    <ligand>
        <name>substrate</name>
    </ligand>
</feature>
<feature type="binding site" evidence="1">
    <location>
        <begin position="207"/>
        <end position="211"/>
    </location>
    <ligand>
        <name>ATP</name>
        <dbReference type="ChEBI" id="CHEBI:30616"/>
    </ligand>
</feature>
<feature type="binding site" evidence="1">
    <location>
        <begin position="282"/>
        <end position="284"/>
    </location>
    <ligand>
        <name>ATP</name>
        <dbReference type="ChEBI" id="CHEBI:30616"/>
    </ligand>
</feature>
<feature type="binding site" evidence="1">
    <location>
        <begin position="330"/>
        <end position="334"/>
    </location>
    <ligand>
        <name>ATP</name>
        <dbReference type="ChEBI" id="CHEBI:30616"/>
    </ligand>
</feature>
<feature type="binding site" evidence="1">
    <location>
        <position position="385"/>
    </location>
    <ligand>
        <name>Mg(2+)</name>
        <dbReference type="ChEBI" id="CHEBI:18420"/>
    </ligand>
</feature>
<feature type="site" description="Transition state stabilizer" evidence="1">
    <location>
        <position position="179"/>
    </location>
</feature>
<feature type="site" description="Transition state stabilizer" evidence="1">
    <location>
        <position position="240"/>
    </location>
</feature>
<comment type="function">
    <text evidence="1">Catalyzes the formation of acetyl phosphate from acetate and ATP. Can also catalyze the reverse reaction.</text>
</comment>
<comment type="catalytic activity">
    <reaction evidence="1">
        <text>acetate + ATP = acetyl phosphate + ADP</text>
        <dbReference type="Rhea" id="RHEA:11352"/>
        <dbReference type="ChEBI" id="CHEBI:22191"/>
        <dbReference type="ChEBI" id="CHEBI:30089"/>
        <dbReference type="ChEBI" id="CHEBI:30616"/>
        <dbReference type="ChEBI" id="CHEBI:456216"/>
        <dbReference type="EC" id="2.7.2.1"/>
    </reaction>
</comment>
<comment type="cofactor">
    <cofactor evidence="1">
        <name>Mg(2+)</name>
        <dbReference type="ChEBI" id="CHEBI:18420"/>
    </cofactor>
    <cofactor evidence="1">
        <name>Mn(2+)</name>
        <dbReference type="ChEBI" id="CHEBI:29035"/>
    </cofactor>
    <text evidence="1">Mg(2+). Can also accept Mn(2+).</text>
</comment>
<comment type="pathway">
    <text evidence="1">Metabolic intermediate biosynthesis; acetyl-CoA biosynthesis; acetyl-CoA from acetate: step 1/2.</text>
</comment>
<comment type="subunit">
    <text evidence="1">Homodimer.</text>
</comment>
<comment type="subcellular location">
    <subcellularLocation>
        <location evidence="1">Cytoplasm</location>
    </subcellularLocation>
</comment>
<comment type="similarity">
    <text evidence="1">Belongs to the acetokinase family.</text>
</comment>
<accession>A4XL40</accession>
<protein>
    <recommendedName>
        <fullName evidence="1">Acetate kinase</fullName>
        <ecNumber evidence="1">2.7.2.1</ecNumber>
    </recommendedName>
    <alternativeName>
        <fullName evidence="1">Acetokinase</fullName>
    </alternativeName>
</protein>
<keyword id="KW-0067">ATP-binding</keyword>
<keyword id="KW-0963">Cytoplasm</keyword>
<keyword id="KW-0418">Kinase</keyword>
<keyword id="KW-0460">Magnesium</keyword>
<keyword id="KW-0479">Metal-binding</keyword>
<keyword id="KW-0547">Nucleotide-binding</keyword>
<keyword id="KW-0808">Transferase</keyword>
<sequence length="399" mass="44558">MKVLVLNSGSSSLKYQFIDTETEVALCKGVVDRIGLPGAFIRHQKNGQEIIKEQEVKDHNVAIKLVLEMLTHPQMGIIKSMDEIDAIGHRVVHGGEYFSDAVIVNEEVKKAIRECIEFAPLHNPANLMGIEACEKEIPGKPNVAVFDTAFHQTMPKYAYMYSLPYEVYEKYKIRKYGFHGTSHKYVAIKAAEYLKRPLKELKLITCHLGNGSSVCAIKYGKSVDTSMGFTPLAGLAMGTRSGTIDPAVILYLMEKENMDVKQMNDLLNKKSGVLGISGVSSDFRDLEKAANEGNERAQLAIDMFCYRVKKYIGEYAAVLGGVDAIIFTAGIGENNPIVREKCVTDLEYMGVLYDKQKNFNAEKGKVFEINKPESKVKVLIVPTNEELMIARETKRLLEK</sequence>
<name>ACKA_CALS8</name>
<reference key="1">
    <citation type="submission" date="2007-04" db="EMBL/GenBank/DDBJ databases">
        <title>Genome sequence of the thermophilic hydrogen-producing bacterium Caldicellulosiruptor saccharolyticus DSM 8903.</title>
        <authorList>
            <person name="Copeland A."/>
            <person name="Lucas S."/>
            <person name="Lapidus A."/>
            <person name="Barry K."/>
            <person name="Detter J.C."/>
            <person name="Glavina del Rio T."/>
            <person name="Hammon N."/>
            <person name="Israni S."/>
            <person name="Dalin E."/>
            <person name="Tice H."/>
            <person name="Pitluck S."/>
            <person name="Kiss H."/>
            <person name="Brettin T."/>
            <person name="Bruce D."/>
            <person name="Han C."/>
            <person name="Schmutz J."/>
            <person name="Larimer F."/>
            <person name="Land M."/>
            <person name="Hauser L."/>
            <person name="Kyrpides N."/>
            <person name="Lykidis A."/>
            <person name="van de Werken H.J.G."/>
            <person name="Verhaart M.R.A."/>
            <person name="VanFossen A.L."/>
            <person name="Lewis D.L."/>
            <person name="Nichols J.D."/>
            <person name="Goorissen H.P."/>
            <person name="van Niel E.W.J."/>
            <person name="Stams F.J.M."/>
            <person name="Willquist K.U."/>
            <person name="Ward D.E."/>
            <person name="van der Oost J."/>
            <person name="Kelly R.M."/>
            <person name="Kengen S.M.W."/>
            <person name="Richardson P."/>
        </authorList>
    </citation>
    <scope>NUCLEOTIDE SEQUENCE [LARGE SCALE GENOMIC DNA]</scope>
    <source>
        <strain>ATCC 43494 / DSM 8903 / Tp8T 6331</strain>
    </source>
</reference>
<dbReference type="EC" id="2.7.2.1" evidence="1"/>
<dbReference type="EMBL" id="CP000679">
    <property type="protein sequence ID" value="ABP67625.1"/>
    <property type="molecule type" value="Genomic_DNA"/>
</dbReference>
<dbReference type="RefSeq" id="WP_011917560.1">
    <property type="nucleotide sequence ID" value="NC_009437.1"/>
</dbReference>
<dbReference type="SMR" id="A4XL40"/>
<dbReference type="STRING" id="351627.Csac_2040"/>
<dbReference type="KEGG" id="csc:Csac_2040"/>
<dbReference type="eggNOG" id="COG0282">
    <property type="taxonomic scope" value="Bacteria"/>
</dbReference>
<dbReference type="HOGENOM" id="CLU_020352_0_1_9"/>
<dbReference type="OrthoDB" id="9802453at2"/>
<dbReference type="UniPathway" id="UPA00340">
    <property type="reaction ID" value="UER00458"/>
</dbReference>
<dbReference type="Proteomes" id="UP000000256">
    <property type="component" value="Chromosome"/>
</dbReference>
<dbReference type="GO" id="GO:0005737">
    <property type="term" value="C:cytoplasm"/>
    <property type="evidence" value="ECO:0007669"/>
    <property type="project" value="UniProtKB-SubCell"/>
</dbReference>
<dbReference type="GO" id="GO:0008776">
    <property type="term" value="F:acetate kinase activity"/>
    <property type="evidence" value="ECO:0007669"/>
    <property type="project" value="UniProtKB-UniRule"/>
</dbReference>
<dbReference type="GO" id="GO:0005524">
    <property type="term" value="F:ATP binding"/>
    <property type="evidence" value="ECO:0007669"/>
    <property type="project" value="UniProtKB-KW"/>
</dbReference>
<dbReference type="GO" id="GO:0000287">
    <property type="term" value="F:magnesium ion binding"/>
    <property type="evidence" value="ECO:0007669"/>
    <property type="project" value="UniProtKB-UniRule"/>
</dbReference>
<dbReference type="GO" id="GO:0006083">
    <property type="term" value="P:acetate metabolic process"/>
    <property type="evidence" value="ECO:0007669"/>
    <property type="project" value="TreeGrafter"/>
</dbReference>
<dbReference type="GO" id="GO:0006085">
    <property type="term" value="P:acetyl-CoA biosynthetic process"/>
    <property type="evidence" value="ECO:0007669"/>
    <property type="project" value="UniProtKB-UniRule"/>
</dbReference>
<dbReference type="CDD" id="cd24010">
    <property type="entry name" value="ASKHA_NBD_AcK_PK"/>
    <property type="match status" value="1"/>
</dbReference>
<dbReference type="Gene3D" id="3.30.420.40">
    <property type="match status" value="2"/>
</dbReference>
<dbReference type="HAMAP" id="MF_00020">
    <property type="entry name" value="Acetate_kinase"/>
    <property type="match status" value="1"/>
</dbReference>
<dbReference type="InterPro" id="IPR004372">
    <property type="entry name" value="Ac/propionate_kinase"/>
</dbReference>
<dbReference type="InterPro" id="IPR000890">
    <property type="entry name" value="Aliphatic_acid_kin_short-chain"/>
</dbReference>
<dbReference type="InterPro" id="IPR023865">
    <property type="entry name" value="Aliphatic_acid_kinase_CS"/>
</dbReference>
<dbReference type="InterPro" id="IPR043129">
    <property type="entry name" value="ATPase_NBD"/>
</dbReference>
<dbReference type="NCBIfam" id="TIGR00016">
    <property type="entry name" value="ackA"/>
    <property type="match status" value="1"/>
</dbReference>
<dbReference type="PANTHER" id="PTHR21060">
    <property type="entry name" value="ACETATE KINASE"/>
    <property type="match status" value="1"/>
</dbReference>
<dbReference type="PANTHER" id="PTHR21060:SF15">
    <property type="entry name" value="ACETATE KINASE-RELATED"/>
    <property type="match status" value="1"/>
</dbReference>
<dbReference type="Pfam" id="PF00871">
    <property type="entry name" value="Acetate_kinase"/>
    <property type="match status" value="1"/>
</dbReference>
<dbReference type="PIRSF" id="PIRSF000722">
    <property type="entry name" value="Acetate_prop_kin"/>
    <property type="match status" value="1"/>
</dbReference>
<dbReference type="PRINTS" id="PR00471">
    <property type="entry name" value="ACETATEKNASE"/>
</dbReference>
<dbReference type="SUPFAM" id="SSF53067">
    <property type="entry name" value="Actin-like ATPase domain"/>
    <property type="match status" value="2"/>
</dbReference>
<dbReference type="PROSITE" id="PS01075">
    <property type="entry name" value="ACETATE_KINASE_1"/>
    <property type="match status" value="1"/>
</dbReference>
<dbReference type="PROSITE" id="PS01076">
    <property type="entry name" value="ACETATE_KINASE_2"/>
    <property type="match status" value="1"/>
</dbReference>